<gene>
    <name type="primary">Srgn</name>
    <name type="synonym">Pgsg</name>
    <name type="synonym">Prg</name>
    <name type="synonym">Prg1</name>
</gene>
<proteinExistence type="evidence at protein level"/>
<name>SRGN_RAT</name>
<feature type="signal peptide" evidence="4">
    <location>
        <begin position="1"/>
        <end position="26"/>
    </location>
</feature>
<feature type="propeptide" id="PRO_0000026681" description="Activation peptide" evidence="6">
    <location>
        <begin position="27"/>
        <end position="75"/>
    </location>
</feature>
<feature type="chain" id="PRO_0000026682" description="Serglycin">
    <location>
        <begin position="76"/>
        <end position="179"/>
    </location>
</feature>
<feature type="repeat" description="1">
    <location>
        <begin position="90"/>
        <end position="91"/>
    </location>
</feature>
<feature type="repeat" description="2">
    <location>
        <begin position="92"/>
        <end position="93"/>
    </location>
</feature>
<feature type="repeat" description="3">
    <location>
        <begin position="94"/>
        <end position="95"/>
    </location>
</feature>
<feature type="repeat" description="4">
    <location>
        <begin position="96"/>
        <end position="97"/>
    </location>
</feature>
<feature type="repeat" description="5">
    <location>
        <begin position="98"/>
        <end position="99"/>
    </location>
</feature>
<feature type="repeat" description="6">
    <location>
        <begin position="100"/>
        <end position="101"/>
    </location>
</feature>
<feature type="repeat" description="7">
    <location>
        <begin position="102"/>
        <end position="103"/>
    </location>
</feature>
<feature type="repeat" description="8">
    <location>
        <begin position="104"/>
        <end position="105"/>
    </location>
</feature>
<feature type="repeat" description="9">
    <location>
        <begin position="106"/>
        <end position="107"/>
    </location>
</feature>
<feature type="repeat" description="10">
    <location>
        <begin position="108"/>
        <end position="109"/>
    </location>
</feature>
<feature type="repeat" description="11">
    <location>
        <begin position="110"/>
        <end position="111"/>
    </location>
</feature>
<feature type="repeat" description="12">
    <location>
        <begin position="112"/>
        <end position="113"/>
    </location>
</feature>
<feature type="repeat" description="13">
    <location>
        <begin position="114"/>
        <end position="115"/>
    </location>
</feature>
<feature type="repeat" description="14">
    <location>
        <begin position="116"/>
        <end position="117"/>
    </location>
</feature>
<feature type="repeat" description="15">
    <location>
        <begin position="118"/>
        <end position="119"/>
    </location>
</feature>
<feature type="repeat" description="16">
    <location>
        <begin position="120"/>
        <end position="121"/>
    </location>
</feature>
<feature type="repeat" description="17">
    <location>
        <begin position="122"/>
        <end position="123"/>
    </location>
</feature>
<feature type="repeat" description="18">
    <location>
        <begin position="124"/>
        <end position="125"/>
    </location>
</feature>
<feature type="repeat" description="19">
    <location>
        <begin position="126"/>
        <end position="127"/>
    </location>
</feature>
<feature type="repeat" description="20">
    <location>
        <begin position="128"/>
        <end position="129"/>
    </location>
</feature>
<feature type="repeat" description="21">
    <location>
        <begin position="130"/>
        <end position="131"/>
    </location>
</feature>
<feature type="repeat" description="22">
    <location>
        <begin position="132"/>
        <end position="133"/>
    </location>
</feature>
<feature type="repeat" description="23">
    <location>
        <begin position="134"/>
        <end position="135"/>
    </location>
</feature>
<feature type="repeat" description="24">
    <location>
        <begin position="136"/>
        <end position="137"/>
    </location>
</feature>
<feature type="region of interest" description="Disordered" evidence="5">
    <location>
        <begin position="86"/>
        <end position="145"/>
    </location>
</feature>
<feature type="region of interest" description="24 X 2 AA tandem repeats of S-G">
    <location>
        <begin position="90"/>
        <end position="137"/>
    </location>
</feature>
<feature type="compositionally biased region" description="Gly residues" evidence="5">
    <location>
        <begin position="92"/>
        <end position="136"/>
    </location>
</feature>
<feature type="glycosylation site" description="O-linked (Xyl...) (glycosaminoglycan) serine" evidence="1">
    <location>
        <position position="90"/>
    </location>
</feature>
<feature type="glycosylation site" description="O-linked (Xyl...) (glycosaminoglycan) serine" evidence="1">
    <location>
        <position position="92"/>
    </location>
</feature>
<feature type="glycosylation site" description="O-linked (Xyl...) (glycosaminoglycan) serine" evidence="4">
    <location>
        <position position="96"/>
    </location>
</feature>
<feature type="glycosylation site" description="O-linked (Xyl...) (glycosaminoglycan) serine" evidence="4">
    <location>
        <position position="98"/>
    </location>
</feature>
<feature type="glycosylation site" description="O-linked (Xyl...) (glycosaminoglycan) serine" evidence="4">
    <location>
        <position position="100"/>
    </location>
</feature>
<feature type="glycosylation site" description="O-linked (Xyl...) (glycosaminoglycan) serine" evidence="4">
    <location>
        <position position="102"/>
    </location>
</feature>
<feature type="glycosylation site" description="O-linked (Xyl...) (glycosaminoglycan) serine" evidence="4">
    <location>
        <position position="104"/>
    </location>
</feature>
<feature type="glycosylation site" description="O-linked (Xyl...) (glycosaminoglycan) serine" evidence="4">
    <location>
        <position position="106"/>
    </location>
</feature>
<feature type="disulfide bond" evidence="4">
    <location>
        <begin position="39"/>
        <end position="48"/>
    </location>
</feature>
<comment type="function">
    <text evidence="1">Plays a role in formation of mast cell secretory granules and mediates storage of various compounds in secretory vesicles. Required for storage of some proteases in both connective tissue and mucosal mast cells and for storage of granzyme B in T-lymphocytes. Plays a role in localizing neutrophil elastase in azurophil granules of neutrophils. Mediates processing of MMP2. Plays a role in cytotoxic cell granule-mediated apoptosis by forming a complex with granzyme B which is delivered to cells by perforin to induce apoptosis. Regulates the secretion of TNF-alpha and may also regulate protease secretion. Inhibits bone mineralization (By similarity).</text>
</comment>
<comment type="subunit">
    <text evidence="1">Binds to activated CD44 and to GZMB.</text>
</comment>
<comment type="subcellular location">
    <subcellularLocation>
        <location evidence="2">Cytoplasmic granule</location>
    </subcellularLocation>
    <subcellularLocation>
        <location evidence="2">Cytolytic granule</location>
    </subcellularLocation>
    <subcellularLocation>
        <location evidence="2">Secreted</location>
        <location evidence="2">Extracellular space</location>
    </subcellularLocation>
    <subcellularLocation>
        <location evidence="2">Golgi apparatus</location>
    </subcellularLocation>
    <text evidence="2 3">Found in mast cell granules and in cytoplasmic granules of cytolytic T-lymphocytes from where it is secreted upon cell activation. Secreted constitutively by endothelial cells and macrophages. Located to Golgi apparatus during neutrophil differentiation (By similarity).</text>
</comment>
<comment type="PTM">
    <text evidence="1">O-glycosylated; contains chondroitin sulfate and heparan sulfate.</text>
</comment>
<comment type="similarity">
    <text evidence="7">Belongs to the serglycin family.</text>
</comment>
<protein>
    <recommendedName>
        <fullName>Serglycin</fullName>
    </recommendedName>
    <alternativeName>
        <fullName>Chondroitin sulfate proteoglycan core protein</fullName>
    </alternativeName>
    <alternativeName>
        <fullName>Cytolytic granule proteoglycan core protein</fullName>
    </alternativeName>
    <alternativeName>
        <fullName>PG19 core protein</fullName>
    </alternativeName>
    <alternativeName>
        <fullName>Proteoglycan 10K core protein</fullName>
    </alternativeName>
    <alternativeName>
        <fullName>Secretory granule proteoglycan core protein</fullName>
    </alternativeName>
</protein>
<keyword id="KW-0053">Apoptosis</keyword>
<keyword id="KW-0091">Biomineralization</keyword>
<keyword id="KW-0903">Direct protein sequencing</keyword>
<keyword id="KW-1015">Disulfide bond</keyword>
<keyword id="KW-0325">Glycoprotein</keyword>
<keyword id="KW-0333">Golgi apparatus</keyword>
<keyword id="KW-0458">Lysosome</keyword>
<keyword id="KW-0654">Proteoglycan</keyword>
<keyword id="KW-1185">Reference proteome</keyword>
<keyword id="KW-0677">Repeat</keyword>
<keyword id="KW-0964">Secreted</keyword>
<keyword id="KW-0732">Signal</keyword>
<reference key="1">
    <citation type="journal article" date="1986" name="J. Biol. Chem.">
        <title>Identification from cDNA of the precursor form of a chondroitin sulfate proteoglycan core protein.</title>
        <authorList>
            <person name="Bourdon M.A."/>
            <person name="Shiga M."/>
            <person name="Ruoslahti E."/>
        </authorList>
    </citation>
    <scope>NUCLEOTIDE SEQUENCE [MRNA]</scope>
    <source>
        <tissue>Yolk sac carcinoma</tissue>
    </source>
</reference>
<reference key="2">
    <citation type="journal article" date="1988" name="J. Biol. Chem.">
        <title>Isolation of a cDNA that encodes the peptide core of the secretory granule proteoglycan of rat basophilic leukemia-1 cells and assessment of its homology to the human analogue.</title>
        <authorList>
            <person name="Avraham S."/>
            <person name="Stevens R.L."/>
            <person name="Gartner M.C."/>
            <person name="Austen K.F."/>
            <person name="Lalley P.A."/>
            <person name="Weis J.H."/>
        </authorList>
    </citation>
    <scope>NUCLEOTIDE SEQUENCE [MRNA]</scope>
</reference>
<reference key="3">
    <citation type="journal article" date="1990" name="Nat. Immun. Cell Growth Regul.">
        <title>Isolation and characterization of a cDNA that encodes the core protein of the cytolytic granule proteoglycan in rat natural killer cells.</title>
        <authorList>
            <person name="Giorda R."/>
            <person name="Chambers W.H."/>
            <person name="Dahl C.A."/>
            <person name="Trucco M."/>
        </authorList>
    </citation>
    <scope>NUCLEOTIDE SEQUENCE [MRNA]</scope>
</reference>
<reference key="4">
    <citation type="journal article" date="2004" name="Genome Res.">
        <title>The status, quality, and expansion of the NIH full-length cDNA project: the Mammalian Gene Collection (MGC).</title>
        <authorList>
            <consortium name="The MGC Project Team"/>
        </authorList>
    </citation>
    <scope>NUCLEOTIDE SEQUENCE [LARGE SCALE MRNA]</scope>
    <source>
        <tissue>Thymus</tissue>
    </source>
</reference>
<reference key="5">
    <citation type="journal article" date="1985" name="Proc. Natl. Acad. Sci. U.S.A.">
        <title>Molecular cloning and sequence analysis of a chondroitin sulfate proteoglycan cDNA.</title>
        <authorList>
            <person name="Bourdon M.A."/>
            <person name="Oldberg A."/>
            <person name="Pierschbacher M.D."/>
            <person name="Ruoslahti E."/>
        </authorList>
    </citation>
    <scope>NUCLEOTIDE SEQUENCE [MRNA] OF 75-179</scope>
    <scope>PROTEIN SEQUENCE OF 76-94</scope>
    <source>
        <tissue>Yolk sac</tissue>
    </source>
</reference>
<evidence type="ECO:0000250" key="1"/>
<evidence type="ECO:0000250" key="2">
    <source>
        <dbReference type="UniProtKB" id="P10124"/>
    </source>
</evidence>
<evidence type="ECO:0000250" key="3">
    <source>
        <dbReference type="UniProtKB" id="P13609"/>
    </source>
</evidence>
<evidence type="ECO:0000255" key="4"/>
<evidence type="ECO:0000256" key="5">
    <source>
        <dbReference type="SAM" id="MobiDB-lite"/>
    </source>
</evidence>
<evidence type="ECO:0000269" key="6">
    <source>
    </source>
</evidence>
<evidence type="ECO:0000305" key="7"/>
<sequence>MRQVPVGTRLVLALAFVLVWGSSVQGYPARRARYQWVRCKPDGIFANCIEEKGPRFDLIAEESNVGPPMTDPVLMRGFPNDFFPISDDYSGSGSGSGSGSGSGSGSGSGSGSGSGSGSGSGSGSGSGSGSGSGSGSGSLADMEWEYQPTDENNIVYFNYGPFDRMLTEQNQEQPGDFII</sequence>
<accession>P04917</accession>
<organism>
    <name type="scientific">Rattus norvegicus</name>
    <name type="common">Rat</name>
    <dbReference type="NCBI Taxonomy" id="10116"/>
    <lineage>
        <taxon>Eukaryota</taxon>
        <taxon>Metazoa</taxon>
        <taxon>Chordata</taxon>
        <taxon>Craniata</taxon>
        <taxon>Vertebrata</taxon>
        <taxon>Euteleostomi</taxon>
        <taxon>Mammalia</taxon>
        <taxon>Eutheria</taxon>
        <taxon>Euarchontoglires</taxon>
        <taxon>Glires</taxon>
        <taxon>Rodentia</taxon>
        <taxon>Myomorpha</taxon>
        <taxon>Muroidea</taxon>
        <taxon>Muridae</taxon>
        <taxon>Murinae</taxon>
        <taxon>Rattus</taxon>
    </lineage>
</organism>
<dbReference type="EMBL" id="K02934">
    <property type="protein sequence ID" value="AAA42171.1"/>
    <property type="molecule type" value="mRNA"/>
</dbReference>
<dbReference type="EMBL" id="J03224">
    <property type="protein sequence ID" value="AAA41837.1"/>
    <property type="molecule type" value="mRNA"/>
</dbReference>
<dbReference type="EMBL" id="BC088144">
    <property type="protein sequence ID" value="AAH88144.1"/>
    <property type="molecule type" value="mRNA"/>
</dbReference>
<dbReference type="PIR" id="A25644">
    <property type="entry name" value="GZRT0"/>
</dbReference>
<dbReference type="RefSeq" id="NP_064459.1">
    <property type="nucleotide sequence ID" value="NM_020074.3"/>
</dbReference>
<dbReference type="RefSeq" id="XP_006256545.1">
    <property type="nucleotide sequence ID" value="XM_006256483.3"/>
</dbReference>
<dbReference type="RefSeq" id="XP_006256546.1">
    <property type="nucleotide sequence ID" value="XM_006256484.5"/>
</dbReference>
<dbReference type="FunCoup" id="P04917">
    <property type="interactions" value="34"/>
</dbReference>
<dbReference type="STRING" id="10116.ENSRNOP00000000443"/>
<dbReference type="GlyCosmos" id="P04917">
    <property type="glycosylation" value="8 sites, No reported glycans"/>
</dbReference>
<dbReference type="GlyGen" id="P04917">
    <property type="glycosylation" value="8 sites"/>
</dbReference>
<dbReference type="SwissPalm" id="P04917"/>
<dbReference type="PaxDb" id="10116-ENSRNOP00000000443"/>
<dbReference type="Ensembl" id="ENSRNOT00000000443.6">
    <property type="protein sequence ID" value="ENSRNOP00000000443.3"/>
    <property type="gene ID" value="ENSRNOG00000000394.6"/>
</dbReference>
<dbReference type="GeneID" id="56782"/>
<dbReference type="KEGG" id="rno:56782"/>
<dbReference type="UCSC" id="RGD:619969">
    <property type="organism name" value="rat"/>
</dbReference>
<dbReference type="AGR" id="RGD:619969"/>
<dbReference type="CTD" id="5552"/>
<dbReference type="RGD" id="619969">
    <property type="gene designation" value="Srgn"/>
</dbReference>
<dbReference type="eggNOG" id="ENOG502S72N">
    <property type="taxonomic scope" value="Eukaryota"/>
</dbReference>
<dbReference type="GeneTree" id="ENSGT00390000000885"/>
<dbReference type="HOGENOM" id="CLU_142594_0_0_1"/>
<dbReference type="InParanoid" id="P04917"/>
<dbReference type="OMA" id="ADMEWEY"/>
<dbReference type="OrthoDB" id="9884289at2759"/>
<dbReference type="PhylomeDB" id="P04917"/>
<dbReference type="TreeFam" id="TF336310"/>
<dbReference type="Reactome" id="R-RNO-114608">
    <property type="pathway name" value="Platelet degranulation"/>
</dbReference>
<dbReference type="PRO" id="PR:P04917"/>
<dbReference type="Proteomes" id="UP000002494">
    <property type="component" value="Chromosome 20"/>
</dbReference>
<dbReference type="Bgee" id="ENSRNOG00000000394">
    <property type="expression patterns" value="Expressed in thymus and 20 other cell types or tissues"/>
</dbReference>
<dbReference type="GO" id="GO:0044194">
    <property type="term" value="C:cytolytic granule"/>
    <property type="evidence" value="ECO:0007669"/>
    <property type="project" value="UniProtKB-SubCell"/>
</dbReference>
<dbReference type="GO" id="GO:0005615">
    <property type="term" value="C:extracellular space"/>
    <property type="evidence" value="ECO:0000250"/>
    <property type="project" value="UniProtKB"/>
</dbReference>
<dbReference type="GO" id="GO:0005794">
    <property type="term" value="C:Golgi apparatus"/>
    <property type="evidence" value="ECO:0000250"/>
    <property type="project" value="UniProtKB"/>
</dbReference>
<dbReference type="GO" id="GO:0000139">
    <property type="term" value="C:Golgi membrane"/>
    <property type="evidence" value="ECO:0000314"/>
    <property type="project" value="RGD"/>
</dbReference>
<dbReference type="GO" id="GO:0042629">
    <property type="term" value="C:mast cell granule"/>
    <property type="evidence" value="ECO:0000250"/>
    <property type="project" value="UniProtKB"/>
</dbReference>
<dbReference type="GO" id="GO:0030141">
    <property type="term" value="C:secretory granule"/>
    <property type="evidence" value="ECO:0000318"/>
    <property type="project" value="GO_Central"/>
</dbReference>
<dbReference type="GO" id="GO:0042588">
    <property type="term" value="C:zymogen granule"/>
    <property type="evidence" value="ECO:0000314"/>
    <property type="project" value="RGD"/>
</dbReference>
<dbReference type="GO" id="GO:0005518">
    <property type="term" value="F:collagen binding"/>
    <property type="evidence" value="ECO:0000314"/>
    <property type="project" value="RGD"/>
</dbReference>
<dbReference type="GO" id="GO:0006915">
    <property type="term" value="P:apoptotic process"/>
    <property type="evidence" value="ECO:0007669"/>
    <property type="project" value="UniProtKB-KW"/>
</dbReference>
<dbReference type="GO" id="GO:0031214">
    <property type="term" value="P:biomineral tissue development"/>
    <property type="evidence" value="ECO:0007669"/>
    <property type="project" value="UniProtKB-KW"/>
</dbReference>
<dbReference type="GO" id="GO:0140507">
    <property type="term" value="P:granzyme-mediated programmed cell death signaling pathway"/>
    <property type="evidence" value="ECO:0000250"/>
    <property type="project" value="UniProtKB"/>
</dbReference>
<dbReference type="GO" id="GO:0033382">
    <property type="term" value="P:maintenance of granzyme B location in T cell secretory granule"/>
    <property type="evidence" value="ECO:0000250"/>
    <property type="project" value="UniProtKB"/>
</dbReference>
<dbReference type="GO" id="GO:0033373">
    <property type="term" value="P:maintenance of protease location in mast cell secretory granule"/>
    <property type="evidence" value="ECO:0000250"/>
    <property type="project" value="UniProtKB"/>
</dbReference>
<dbReference type="GO" id="GO:0033364">
    <property type="term" value="P:mast cell secretory granule organization"/>
    <property type="evidence" value="ECO:0000250"/>
    <property type="project" value="UniProtKB"/>
</dbReference>
<dbReference type="GO" id="GO:0030502">
    <property type="term" value="P:negative regulation of bone mineralization"/>
    <property type="evidence" value="ECO:0000250"/>
    <property type="project" value="UniProtKB"/>
</dbReference>
<dbReference type="GO" id="GO:0001818">
    <property type="term" value="P:negative regulation of cytokine production"/>
    <property type="evidence" value="ECO:0000250"/>
    <property type="project" value="UniProtKB"/>
</dbReference>
<dbReference type="GO" id="GO:0016485">
    <property type="term" value="P:protein processing"/>
    <property type="evidence" value="ECO:0000250"/>
    <property type="project" value="UniProtKB"/>
</dbReference>
<dbReference type="GO" id="GO:0033363">
    <property type="term" value="P:secretory granule organization"/>
    <property type="evidence" value="ECO:0000318"/>
    <property type="project" value="GO_Central"/>
</dbReference>
<dbReference type="GO" id="GO:0033371">
    <property type="term" value="P:T cell secretory granule organization"/>
    <property type="evidence" value="ECO:0000250"/>
    <property type="project" value="UniProtKB"/>
</dbReference>
<dbReference type="InterPro" id="IPR007455">
    <property type="entry name" value="Serglycin"/>
</dbReference>
<dbReference type="PANTHER" id="PTHR17178">
    <property type="entry name" value="SECRETORY GRANULE PROTEOGLYCAN CORE PROTEIN"/>
    <property type="match status" value="1"/>
</dbReference>
<dbReference type="PANTHER" id="PTHR17178:SF0">
    <property type="entry name" value="SERGLYCIN"/>
    <property type="match status" value="1"/>
</dbReference>
<dbReference type="Pfam" id="PF04360">
    <property type="entry name" value="Serglycin"/>
    <property type="match status" value="2"/>
</dbReference>